<proteinExistence type="inferred from homology"/>
<gene>
    <name evidence="1" type="primary">mraY</name>
    <name type="ordered locus">Ent638_0633</name>
</gene>
<feature type="chain" id="PRO_1000057277" description="Phospho-N-acetylmuramoyl-pentapeptide-transferase">
    <location>
        <begin position="1"/>
        <end position="360"/>
    </location>
</feature>
<feature type="transmembrane region" description="Helical" evidence="1">
    <location>
        <begin position="26"/>
        <end position="46"/>
    </location>
</feature>
<feature type="transmembrane region" description="Helical" evidence="1">
    <location>
        <begin position="72"/>
        <end position="92"/>
    </location>
</feature>
<feature type="transmembrane region" description="Helical" evidence="1">
    <location>
        <begin position="94"/>
        <end position="114"/>
    </location>
</feature>
<feature type="transmembrane region" description="Helical" evidence="1">
    <location>
        <begin position="132"/>
        <end position="152"/>
    </location>
</feature>
<feature type="transmembrane region" description="Helical" evidence="1">
    <location>
        <begin position="168"/>
        <end position="188"/>
    </location>
</feature>
<feature type="transmembrane region" description="Helical" evidence="1">
    <location>
        <begin position="199"/>
        <end position="219"/>
    </location>
</feature>
<feature type="transmembrane region" description="Helical" evidence="1">
    <location>
        <begin position="236"/>
        <end position="256"/>
    </location>
</feature>
<feature type="transmembrane region" description="Helical" evidence="1">
    <location>
        <begin position="263"/>
        <end position="283"/>
    </location>
</feature>
<feature type="transmembrane region" description="Helical" evidence="1">
    <location>
        <begin position="288"/>
        <end position="308"/>
    </location>
</feature>
<feature type="transmembrane region" description="Helical" evidence="1">
    <location>
        <begin position="338"/>
        <end position="358"/>
    </location>
</feature>
<comment type="function">
    <text evidence="1">Catalyzes the initial step of the lipid cycle reactions in the biosynthesis of the cell wall peptidoglycan: transfers peptidoglycan precursor phospho-MurNAc-pentapeptide from UDP-MurNAc-pentapeptide onto the lipid carrier undecaprenyl phosphate, yielding undecaprenyl-pyrophosphoryl-MurNAc-pentapeptide, known as lipid I.</text>
</comment>
<comment type="catalytic activity">
    <reaction evidence="1">
        <text>UDP-N-acetyl-alpha-D-muramoyl-L-alanyl-gamma-D-glutamyl-meso-2,6-diaminopimeloyl-D-alanyl-D-alanine + di-trans,octa-cis-undecaprenyl phosphate = di-trans,octa-cis-undecaprenyl diphospho-N-acetyl-alpha-D-muramoyl-L-alanyl-D-glutamyl-meso-2,6-diaminopimeloyl-D-alanyl-D-alanine + UMP</text>
        <dbReference type="Rhea" id="RHEA:28386"/>
        <dbReference type="ChEBI" id="CHEBI:57865"/>
        <dbReference type="ChEBI" id="CHEBI:60392"/>
        <dbReference type="ChEBI" id="CHEBI:61386"/>
        <dbReference type="ChEBI" id="CHEBI:61387"/>
        <dbReference type="EC" id="2.7.8.13"/>
    </reaction>
</comment>
<comment type="cofactor">
    <cofactor evidence="1">
        <name>Mg(2+)</name>
        <dbReference type="ChEBI" id="CHEBI:18420"/>
    </cofactor>
</comment>
<comment type="pathway">
    <text evidence="1">Cell wall biogenesis; peptidoglycan biosynthesis.</text>
</comment>
<comment type="subcellular location">
    <subcellularLocation>
        <location evidence="1">Cell inner membrane</location>
        <topology evidence="1">Multi-pass membrane protein</topology>
    </subcellularLocation>
</comment>
<comment type="similarity">
    <text evidence="1">Belongs to the glycosyltransferase 4 family. MraY subfamily.</text>
</comment>
<evidence type="ECO:0000255" key="1">
    <source>
        <dbReference type="HAMAP-Rule" id="MF_00038"/>
    </source>
</evidence>
<organism>
    <name type="scientific">Enterobacter sp. (strain 638)</name>
    <dbReference type="NCBI Taxonomy" id="399742"/>
    <lineage>
        <taxon>Bacteria</taxon>
        <taxon>Pseudomonadati</taxon>
        <taxon>Pseudomonadota</taxon>
        <taxon>Gammaproteobacteria</taxon>
        <taxon>Enterobacterales</taxon>
        <taxon>Enterobacteriaceae</taxon>
        <taxon>Enterobacter</taxon>
    </lineage>
</organism>
<name>MRAY_ENT38</name>
<dbReference type="EC" id="2.7.8.13" evidence="1"/>
<dbReference type="EMBL" id="CP000653">
    <property type="protein sequence ID" value="ABP59320.1"/>
    <property type="molecule type" value="Genomic_DNA"/>
</dbReference>
<dbReference type="RefSeq" id="WP_012016042.1">
    <property type="nucleotide sequence ID" value="NC_009436.1"/>
</dbReference>
<dbReference type="SMR" id="A4W6J0"/>
<dbReference type="STRING" id="399742.Ent638_0633"/>
<dbReference type="GeneID" id="93307807"/>
<dbReference type="KEGG" id="ent:Ent638_0633"/>
<dbReference type="eggNOG" id="COG0472">
    <property type="taxonomic scope" value="Bacteria"/>
</dbReference>
<dbReference type="HOGENOM" id="CLU_023982_0_0_6"/>
<dbReference type="OrthoDB" id="9805475at2"/>
<dbReference type="UniPathway" id="UPA00219"/>
<dbReference type="Proteomes" id="UP000000230">
    <property type="component" value="Chromosome"/>
</dbReference>
<dbReference type="GO" id="GO:0005886">
    <property type="term" value="C:plasma membrane"/>
    <property type="evidence" value="ECO:0007669"/>
    <property type="project" value="UniProtKB-SubCell"/>
</dbReference>
<dbReference type="GO" id="GO:0046872">
    <property type="term" value="F:metal ion binding"/>
    <property type="evidence" value="ECO:0007669"/>
    <property type="project" value="UniProtKB-KW"/>
</dbReference>
<dbReference type="GO" id="GO:0008963">
    <property type="term" value="F:phospho-N-acetylmuramoyl-pentapeptide-transferase activity"/>
    <property type="evidence" value="ECO:0007669"/>
    <property type="project" value="UniProtKB-UniRule"/>
</dbReference>
<dbReference type="GO" id="GO:0051992">
    <property type="term" value="F:UDP-N-acetylmuramoyl-L-alanyl-D-glutamyl-meso-2,6-diaminopimelyl-D-alanyl-D-alanine:undecaprenyl-phosphate transferase activity"/>
    <property type="evidence" value="ECO:0007669"/>
    <property type="project" value="RHEA"/>
</dbReference>
<dbReference type="GO" id="GO:0051301">
    <property type="term" value="P:cell division"/>
    <property type="evidence" value="ECO:0007669"/>
    <property type="project" value="UniProtKB-KW"/>
</dbReference>
<dbReference type="GO" id="GO:0071555">
    <property type="term" value="P:cell wall organization"/>
    <property type="evidence" value="ECO:0007669"/>
    <property type="project" value="UniProtKB-KW"/>
</dbReference>
<dbReference type="GO" id="GO:0009252">
    <property type="term" value="P:peptidoglycan biosynthetic process"/>
    <property type="evidence" value="ECO:0007669"/>
    <property type="project" value="UniProtKB-UniRule"/>
</dbReference>
<dbReference type="GO" id="GO:0008360">
    <property type="term" value="P:regulation of cell shape"/>
    <property type="evidence" value="ECO:0007669"/>
    <property type="project" value="UniProtKB-KW"/>
</dbReference>
<dbReference type="CDD" id="cd06852">
    <property type="entry name" value="GT_MraY"/>
    <property type="match status" value="1"/>
</dbReference>
<dbReference type="HAMAP" id="MF_00038">
    <property type="entry name" value="MraY"/>
    <property type="match status" value="1"/>
</dbReference>
<dbReference type="InterPro" id="IPR000715">
    <property type="entry name" value="Glycosyl_transferase_4"/>
</dbReference>
<dbReference type="InterPro" id="IPR003524">
    <property type="entry name" value="PNAcMuramoyl-5peptid_Trfase"/>
</dbReference>
<dbReference type="InterPro" id="IPR018480">
    <property type="entry name" value="PNAcMuramoyl-5peptid_Trfase_CS"/>
</dbReference>
<dbReference type="NCBIfam" id="TIGR00445">
    <property type="entry name" value="mraY"/>
    <property type="match status" value="1"/>
</dbReference>
<dbReference type="PANTHER" id="PTHR22926">
    <property type="entry name" value="PHOSPHO-N-ACETYLMURAMOYL-PENTAPEPTIDE-TRANSFERASE"/>
    <property type="match status" value="1"/>
</dbReference>
<dbReference type="PANTHER" id="PTHR22926:SF5">
    <property type="entry name" value="PHOSPHO-N-ACETYLMURAMOYL-PENTAPEPTIDE-TRANSFERASE HOMOLOG"/>
    <property type="match status" value="1"/>
</dbReference>
<dbReference type="Pfam" id="PF00953">
    <property type="entry name" value="Glycos_transf_4"/>
    <property type="match status" value="1"/>
</dbReference>
<dbReference type="Pfam" id="PF10555">
    <property type="entry name" value="MraY_sig1"/>
    <property type="match status" value="1"/>
</dbReference>
<dbReference type="PROSITE" id="PS01347">
    <property type="entry name" value="MRAY_1"/>
    <property type="match status" value="1"/>
</dbReference>
<dbReference type="PROSITE" id="PS01348">
    <property type="entry name" value="MRAY_2"/>
    <property type="match status" value="1"/>
</dbReference>
<protein>
    <recommendedName>
        <fullName evidence="1">Phospho-N-acetylmuramoyl-pentapeptide-transferase</fullName>
        <ecNumber evidence="1">2.7.8.13</ecNumber>
    </recommendedName>
    <alternativeName>
        <fullName evidence="1">UDP-MurNAc-pentapeptide phosphotransferase</fullName>
    </alternativeName>
</protein>
<accession>A4W6J0</accession>
<sequence length="360" mass="39938">MLVWLAEHLVKYYSGFNVFSYLTFRAIVSLLTALFISLWMGPRMIARLQKLSFGQVVRNDGPESHFSKRGTPTMGGIMILTAIVVSVLLWAYPSNPYVWCVLTVLIGYGIIGFVDDYRKVVRKDTKGLIARWKYFWMSVIALGVAFALYLAGKDTPATELVVPFFKDVMPQLGLFYILLAYFVIVGTGNAVNLTDGLDGLAIMPTVFVAGGFALVAWATGNMNFANYLHIPYLRHAGELVIVCTAIVGAGLGFLWFNTYPAQVFMGDVGSLALGGALGIIAVLLRQEFLLVIMGGVFVVETLSVILQVGSFKLRGQRIFRMAPIHHHYELKGWPEPRVIVRFWIISLMLVLIGLATLKVR</sequence>
<reference key="1">
    <citation type="journal article" date="2010" name="PLoS Genet.">
        <title>Genome sequence of the plant growth promoting endophytic bacterium Enterobacter sp. 638.</title>
        <authorList>
            <person name="Taghavi S."/>
            <person name="van der Lelie D."/>
            <person name="Hoffman A."/>
            <person name="Zhang Y.B."/>
            <person name="Walla M.D."/>
            <person name="Vangronsveld J."/>
            <person name="Newman L."/>
            <person name="Monchy S."/>
        </authorList>
    </citation>
    <scope>NUCLEOTIDE SEQUENCE [LARGE SCALE GENOMIC DNA]</scope>
    <source>
        <strain>638</strain>
    </source>
</reference>
<keyword id="KW-0131">Cell cycle</keyword>
<keyword id="KW-0132">Cell division</keyword>
<keyword id="KW-0997">Cell inner membrane</keyword>
<keyword id="KW-1003">Cell membrane</keyword>
<keyword id="KW-0133">Cell shape</keyword>
<keyword id="KW-0961">Cell wall biogenesis/degradation</keyword>
<keyword id="KW-0460">Magnesium</keyword>
<keyword id="KW-0472">Membrane</keyword>
<keyword id="KW-0479">Metal-binding</keyword>
<keyword id="KW-0573">Peptidoglycan synthesis</keyword>
<keyword id="KW-0808">Transferase</keyword>
<keyword id="KW-0812">Transmembrane</keyword>
<keyword id="KW-1133">Transmembrane helix</keyword>